<name>DNAK_METTP</name>
<dbReference type="EMBL" id="CP000477">
    <property type="protein sequence ID" value="ABK14521.1"/>
    <property type="molecule type" value="Genomic_DNA"/>
</dbReference>
<dbReference type="RefSeq" id="WP_011695917.1">
    <property type="nucleotide sequence ID" value="NC_008553.1"/>
</dbReference>
<dbReference type="SMR" id="A0B747"/>
<dbReference type="STRING" id="349307.Mthe_0731"/>
<dbReference type="GeneID" id="4461882"/>
<dbReference type="KEGG" id="mtp:Mthe_0731"/>
<dbReference type="HOGENOM" id="CLU_005965_7_0_2"/>
<dbReference type="OrthoDB" id="9944at2157"/>
<dbReference type="Proteomes" id="UP000000674">
    <property type="component" value="Chromosome"/>
</dbReference>
<dbReference type="GO" id="GO:0005524">
    <property type="term" value="F:ATP binding"/>
    <property type="evidence" value="ECO:0007669"/>
    <property type="project" value="UniProtKB-UniRule"/>
</dbReference>
<dbReference type="GO" id="GO:0140662">
    <property type="term" value="F:ATP-dependent protein folding chaperone"/>
    <property type="evidence" value="ECO:0007669"/>
    <property type="project" value="InterPro"/>
</dbReference>
<dbReference type="GO" id="GO:0051082">
    <property type="term" value="F:unfolded protein binding"/>
    <property type="evidence" value="ECO:0007669"/>
    <property type="project" value="InterPro"/>
</dbReference>
<dbReference type="CDD" id="cd10234">
    <property type="entry name" value="ASKHA_NBD_HSP70_DnaK-like"/>
    <property type="match status" value="1"/>
</dbReference>
<dbReference type="FunFam" id="2.60.34.10:FF:000014">
    <property type="entry name" value="Chaperone protein DnaK HSP70"/>
    <property type="match status" value="1"/>
</dbReference>
<dbReference type="FunFam" id="1.20.1270.10:FF:000001">
    <property type="entry name" value="Molecular chaperone DnaK"/>
    <property type="match status" value="1"/>
</dbReference>
<dbReference type="FunFam" id="3.30.420.40:FF:000071">
    <property type="entry name" value="Molecular chaperone DnaK"/>
    <property type="match status" value="1"/>
</dbReference>
<dbReference type="FunFam" id="3.90.640.10:FF:000003">
    <property type="entry name" value="Molecular chaperone DnaK"/>
    <property type="match status" value="1"/>
</dbReference>
<dbReference type="Gene3D" id="1.20.1270.10">
    <property type="match status" value="1"/>
</dbReference>
<dbReference type="Gene3D" id="3.30.420.40">
    <property type="match status" value="2"/>
</dbReference>
<dbReference type="Gene3D" id="3.90.640.10">
    <property type="entry name" value="Actin, Chain A, domain 4"/>
    <property type="match status" value="1"/>
</dbReference>
<dbReference type="Gene3D" id="2.60.34.10">
    <property type="entry name" value="Substrate Binding Domain Of DNAk, Chain A, domain 1"/>
    <property type="match status" value="1"/>
</dbReference>
<dbReference type="HAMAP" id="MF_00332">
    <property type="entry name" value="DnaK"/>
    <property type="match status" value="1"/>
</dbReference>
<dbReference type="InterPro" id="IPR043129">
    <property type="entry name" value="ATPase_NBD"/>
</dbReference>
<dbReference type="InterPro" id="IPR012725">
    <property type="entry name" value="Chaperone_DnaK"/>
</dbReference>
<dbReference type="InterPro" id="IPR018181">
    <property type="entry name" value="Heat_shock_70_CS"/>
</dbReference>
<dbReference type="InterPro" id="IPR029048">
    <property type="entry name" value="HSP70_C_sf"/>
</dbReference>
<dbReference type="InterPro" id="IPR029047">
    <property type="entry name" value="HSP70_peptide-bd_sf"/>
</dbReference>
<dbReference type="InterPro" id="IPR013126">
    <property type="entry name" value="Hsp_70_fam"/>
</dbReference>
<dbReference type="NCBIfam" id="NF001413">
    <property type="entry name" value="PRK00290.1"/>
    <property type="match status" value="1"/>
</dbReference>
<dbReference type="NCBIfam" id="TIGR02350">
    <property type="entry name" value="prok_dnaK"/>
    <property type="match status" value="1"/>
</dbReference>
<dbReference type="PANTHER" id="PTHR19375">
    <property type="entry name" value="HEAT SHOCK PROTEIN 70KDA"/>
    <property type="match status" value="1"/>
</dbReference>
<dbReference type="Pfam" id="PF00012">
    <property type="entry name" value="HSP70"/>
    <property type="match status" value="1"/>
</dbReference>
<dbReference type="PRINTS" id="PR00301">
    <property type="entry name" value="HEATSHOCK70"/>
</dbReference>
<dbReference type="SUPFAM" id="SSF53067">
    <property type="entry name" value="Actin-like ATPase domain"/>
    <property type="match status" value="2"/>
</dbReference>
<dbReference type="SUPFAM" id="SSF100934">
    <property type="entry name" value="Heat shock protein 70kD (HSP70), C-terminal subdomain"/>
    <property type="match status" value="1"/>
</dbReference>
<dbReference type="SUPFAM" id="SSF100920">
    <property type="entry name" value="Heat shock protein 70kD (HSP70), peptide-binding domain"/>
    <property type="match status" value="1"/>
</dbReference>
<dbReference type="PROSITE" id="PS00297">
    <property type="entry name" value="HSP70_1"/>
    <property type="match status" value="1"/>
</dbReference>
<dbReference type="PROSITE" id="PS00329">
    <property type="entry name" value="HSP70_2"/>
    <property type="match status" value="1"/>
</dbReference>
<dbReference type="PROSITE" id="PS01036">
    <property type="entry name" value="HSP70_3"/>
    <property type="match status" value="1"/>
</dbReference>
<sequence>MSKIIGIDLGTSNSAAAVLIGGRPTIIPSAEGTSLGGKAFPSYVAFTKDGQVLVGEPARRQAITNPEGTITGIKRKMGTDYKVKVFGKEYTPEEISAHILRKIKQDAEAFLGEKVEKAVITVPAYFNDNQRQATKDAGTIAGLDVVRIINEPTAAALAYGLDKGGEQKIMVFDLGGGTLDVTIMEMGEGVFEVKSTSGDTQLGGRDMDERLLDYIVEKFRQETGINLRNDVMAMQRLREAAEVAKIELSSMLQTTINLPYITADASGPKHLNMTITRAKLEELIQDVLERCRGPMEQALSDAKLSKSDIDKIILVGGPTRMPAVQEFVKRVMGKDVERGVDPMECVAMGAAIQAGVLAGEVKDILLLDVTPLSLGVETLGGIMTRLIERNTTIPTRKSQIFTTAADNQTSVEIHVLQGERPLAKDNISLGRFTLVGIPPAPRGIPQIEVTFDIDANGILHVSAKDLATKKEQRITITAPHRLSKEEIEQKVKEAERYAQEDARRREEIETRNQADNLIYTTEKMLKEAGDVATSEQRERIEKAISELRDALSGKDVQEIKSKMEKLQNAVYELSAAMYQRAAQSQSGSATGSASGSTSGGKTVEADYEVVNDDKR</sequence>
<evidence type="ECO:0000255" key="1">
    <source>
        <dbReference type="HAMAP-Rule" id="MF_00332"/>
    </source>
</evidence>
<evidence type="ECO:0000256" key="2">
    <source>
        <dbReference type="SAM" id="MobiDB-lite"/>
    </source>
</evidence>
<comment type="function">
    <text evidence="1">Acts as a chaperone.</text>
</comment>
<comment type="similarity">
    <text evidence="1">Belongs to the heat shock protein 70 family.</text>
</comment>
<proteinExistence type="inferred from homology"/>
<keyword id="KW-0067">ATP-binding</keyword>
<keyword id="KW-0143">Chaperone</keyword>
<keyword id="KW-0547">Nucleotide-binding</keyword>
<keyword id="KW-1185">Reference proteome</keyword>
<gene>
    <name evidence="1" type="primary">dnaK</name>
    <name type="ordered locus">Mthe_0731</name>
</gene>
<organism>
    <name type="scientific">Methanothrix thermoacetophila (strain DSM 6194 / JCM 14653 / NBRC 101360 / PT)</name>
    <name type="common">Methanosaeta thermophila</name>
    <dbReference type="NCBI Taxonomy" id="349307"/>
    <lineage>
        <taxon>Archaea</taxon>
        <taxon>Methanobacteriati</taxon>
        <taxon>Methanobacteriota</taxon>
        <taxon>Stenosarchaea group</taxon>
        <taxon>Methanomicrobia</taxon>
        <taxon>Methanotrichales</taxon>
        <taxon>Methanotrichaceae</taxon>
        <taxon>Methanothrix</taxon>
    </lineage>
</organism>
<protein>
    <recommendedName>
        <fullName evidence="1">Chaperone protein DnaK</fullName>
    </recommendedName>
    <alternativeName>
        <fullName evidence="1">HSP70</fullName>
    </alternativeName>
    <alternativeName>
        <fullName evidence="1">Heat shock 70 kDa protein</fullName>
    </alternativeName>
    <alternativeName>
        <fullName evidence="1">Heat shock protein 70</fullName>
    </alternativeName>
</protein>
<reference key="1">
    <citation type="submission" date="2006-10" db="EMBL/GenBank/DDBJ databases">
        <title>Complete sequence of Methanosaeta thermophila PT.</title>
        <authorList>
            <consortium name="US DOE Joint Genome Institute"/>
            <person name="Copeland A."/>
            <person name="Lucas S."/>
            <person name="Lapidus A."/>
            <person name="Barry K."/>
            <person name="Detter J.C."/>
            <person name="Glavina del Rio T."/>
            <person name="Hammon N."/>
            <person name="Israni S."/>
            <person name="Pitluck S."/>
            <person name="Chain P."/>
            <person name="Malfatti S."/>
            <person name="Shin M."/>
            <person name="Vergez L."/>
            <person name="Schmutz J."/>
            <person name="Larimer F."/>
            <person name="Land M."/>
            <person name="Hauser L."/>
            <person name="Kyrpides N."/>
            <person name="Kim E."/>
            <person name="Smith K.S."/>
            <person name="Ingram-Smith C."/>
            <person name="Richardson P."/>
        </authorList>
    </citation>
    <scope>NUCLEOTIDE SEQUENCE [LARGE SCALE GENOMIC DNA]</scope>
    <source>
        <strain>DSM 6194 / JCM 14653 / NBRC 101360 / PT</strain>
    </source>
</reference>
<accession>A0B747</accession>
<feature type="chain" id="PRO_1000059603" description="Chaperone protein DnaK">
    <location>
        <begin position="1"/>
        <end position="615"/>
    </location>
</feature>
<feature type="region of interest" description="Disordered" evidence="2">
    <location>
        <begin position="579"/>
        <end position="615"/>
    </location>
</feature>
<feature type="compositionally biased region" description="Low complexity" evidence="2">
    <location>
        <begin position="581"/>
        <end position="600"/>
    </location>
</feature>
<feature type="compositionally biased region" description="Acidic residues" evidence="2">
    <location>
        <begin position="605"/>
        <end position="615"/>
    </location>
</feature>